<feature type="signal peptide" evidence="2">
    <location>
        <begin position="1"/>
        <end position="45"/>
    </location>
</feature>
<feature type="chain" id="PRO_0000289106" description="Meteorin-like protein">
    <location>
        <begin position="46"/>
        <end position="311"/>
    </location>
</feature>
<feature type="glycosylation site" description="N-linked (GlcNAc...) asparagine" evidence="2">
    <location>
        <position position="103"/>
    </location>
</feature>
<feature type="disulfide bond" evidence="3">
    <location>
        <begin position="52"/>
        <end position="75"/>
    </location>
</feature>
<feature type="disulfide bond" evidence="3">
    <location>
        <begin position="107"/>
        <end position="143"/>
    </location>
</feature>
<feature type="disulfide bond" evidence="3">
    <location>
        <begin position="188"/>
        <end position="260"/>
    </location>
</feature>
<feature type="disulfide bond" evidence="3">
    <location>
        <begin position="191"/>
        <end position="284"/>
    </location>
</feature>
<feature type="disulfide bond" evidence="3">
    <location>
        <begin position="201"/>
        <end position="306"/>
    </location>
</feature>
<sequence>MRGVVWAARRRAGQQWPRSPGPGPGPPPPPPLLLLLLLLLGGASAQYSSDLCSWKGSGLTREAHSKEVEQVYLRCSAGSVEWMYPTGALIVNLRPNTFSPAQNLTVCIKPFRDSSGANIYLEKTGELRLLVRDVRGEPGQVQCFSLEQGGLFVEATPQQDISRRTTGFQYELMSGQRGLDLHVLSAPCRPCSDTEVLLAICTSDFVVRGFIEDVTHVPEQQVSVIHLRVSRLHRQKSRVFQPAPEDSGHWLGHVTTLLQCGVRPGHGEFLFTGHVHFGEAQLGCAPRFSDFQKMYRKAEERGINPCEINME</sequence>
<keyword id="KW-1015">Disulfide bond</keyword>
<keyword id="KW-0325">Glycoprotein</keyword>
<keyword id="KW-0372">Hormone</keyword>
<keyword id="KW-1185">Reference proteome</keyword>
<keyword id="KW-0964">Secreted</keyword>
<keyword id="KW-0732">Signal</keyword>
<protein>
    <recommendedName>
        <fullName>Meteorin-like protein</fullName>
    </recommendedName>
    <alternativeName>
        <fullName>Subfatin</fullName>
    </alternativeName>
</protein>
<accession>Q5RJL6</accession>
<name>METRL_RAT</name>
<organism>
    <name type="scientific">Rattus norvegicus</name>
    <name type="common">Rat</name>
    <dbReference type="NCBI Taxonomy" id="10116"/>
    <lineage>
        <taxon>Eukaryota</taxon>
        <taxon>Metazoa</taxon>
        <taxon>Chordata</taxon>
        <taxon>Craniata</taxon>
        <taxon>Vertebrata</taxon>
        <taxon>Euteleostomi</taxon>
        <taxon>Mammalia</taxon>
        <taxon>Eutheria</taxon>
        <taxon>Euarchontoglires</taxon>
        <taxon>Glires</taxon>
        <taxon>Rodentia</taxon>
        <taxon>Myomorpha</taxon>
        <taxon>Muroidea</taxon>
        <taxon>Muridae</taxon>
        <taxon>Murinae</taxon>
        <taxon>Rattus</taxon>
    </lineage>
</organism>
<dbReference type="EMBL" id="BC086590">
    <property type="protein sequence ID" value="AAH86590.1"/>
    <property type="molecule type" value="mRNA"/>
</dbReference>
<dbReference type="RefSeq" id="NP_001014126.1">
    <property type="nucleotide sequence ID" value="NM_001014104.1"/>
</dbReference>
<dbReference type="SMR" id="Q5RJL6"/>
<dbReference type="FunCoup" id="Q5RJL6">
    <property type="interactions" value="92"/>
</dbReference>
<dbReference type="STRING" id="10116.ENSRNOP00000066593"/>
<dbReference type="GlyCosmos" id="Q5RJL6">
    <property type="glycosylation" value="1 site, No reported glycans"/>
</dbReference>
<dbReference type="GlyGen" id="Q5RJL6">
    <property type="glycosylation" value="1 site"/>
</dbReference>
<dbReference type="PhosphoSitePlus" id="Q5RJL6"/>
<dbReference type="PaxDb" id="10116-ENSRNOP00000066593"/>
<dbReference type="Ensembl" id="ENSRNOT00000072190.3">
    <property type="protein sequence ID" value="ENSRNOP00000066593.1"/>
    <property type="gene ID" value="ENSRNOG00000046202.3"/>
</dbReference>
<dbReference type="GeneID" id="316842"/>
<dbReference type="KEGG" id="rno:316842"/>
<dbReference type="AGR" id="RGD:1359271"/>
<dbReference type="CTD" id="284207"/>
<dbReference type="RGD" id="1359271">
    <property type="gene designation" value="Metrnl"/>
</dbReference>
<dbReference type="eggNOG" id="ENOG502QUQB">
    <property type="taxonomic scope" value="Eukaryota"/>
</dbReference>
<dbReference type="GeneTree" id="ENSGT00390000001390"/>
<dbReference type="InParanoid" id="Q5RJL6"/>
<dbReference type="OMA" id="ISFCQYS"/>
<dbReference type="OrthoDB" id="6092325at2759"/>
<dbReference type="PhylomeDB" id="Q5RJL6"/>
<dbReference type="PRO" id="PR:Q5RJL6"/>
<dbReference type="Proteomes" id="UP000002494">
    <property type="component" value="Chromosome 10"/>
</dbReference>
<dbReference type="Bgee" id="ENSRNOG00000046202">
    <property type="expression patterns" value="Expressed in esophagus and 19 other cell types or tissues"/>
</dbReference>
<dbReference type="ExpressionAtlas" id="Q5RJL6">
    <property type="expression patterns" value="baseline and differential"/>
</dbReference>
<dbReference type="GO" id="GO:0005615">
    <property type="term" value="C:extracellular space"/>
    <property type="evidence" value="ECO:0000250"/>
    <property type="project" value="UniProtKB"/>
</dbReference>
<dbReference type="GO" id="GO:0005179">
    <property type="term" value="F:hormone activity"/>
    <property type="evidence" value="ECO:0000250"/>
    <property type="project" value="UniProtKB"/>
</dbReference>
<dbReference type="GO" id="GO:0050873">
    <property type="term" value="P:brown fat cell differentiation"/>
    <property type="evidence" value="ECO:0000250"/>
    <property type="project" value="UniProtKB"/>
</dbReference>
<dbReference type="GO" id="GO:0097009">
    <property type="term" value="P:energy homeostasis"/>
    <property type="evidence" value="ECO:0000250"/>
    <property type="project" value="UniProtKB"/>
</dbReference>
<dbReference type="GO" id="GO:0045444">
    <property type="term" value="P:fat cell differentiation"/>
    <property type="evidence" value="ECO:0000250"/>
    <property type="project" value="CAFA"/>
</dbReference>
<dbReference type="GO" id="GO:0050728">
    <property type="term" value="P:negative regulation of inflammatory response"/>
    <property type="evidence" value="ECO:0000250"/>
    <property type="project" value="UniProtKB"/>
</dbReference>
<dbReference type="GO" id="GO:0090336">
    <property type="term" value="P:positive regulation of brown fat cell differentiation"/>
    <property type="evidence" value="ECO:0000250"/>
    <property type="project" value="UniProtKB"/>
</dbReference>
<dbReference type="GO" id="GO:0009409">
    <property type="term" value="P:response to cold"/>
    <property type="evidence" value="ECO:0000250"/>
    <property type="project" value="UniProtKB"/>
</dbReference>
<dbReference type="GO" id="GO:0014850">
    <property type="term" value="P:response to muscle activity"/>
    <property type="evidence" value="ECO:0000250"/>
    <property type="project" value="UniProtKB"/>
</dbReference>
<dbReference type="InterPro" id="IPR051998">
    <property type="entry name" value="Meteorin-like"/>
</dbReference>
<dbReference type="PANTHER" id="PTHR28593">
    <property type="entry name" value="METEORIN-LIKE PROTEIN"/>
    <property type="match status" value="1"/>
</dbReference>
<dbReference type="PANTHER" id="PTHR28593:SF1">
    <property type="entry name" value="METEORIN-LIKE PROTEIN"/>
    <property type="match status" value="1"/>
</dbReference>
<proteinExistence type="evidence at transcript level"/>
<reference key="1">
    <citation type="journal article" date="2004" name="Genome Res.">
        <title>The status, quality, and expansion of the NIH full-length cDNA project: the Mammalian Gene Collection (MGC).</title>
        <authorList>
            <consortium name="The MGC Project Team"/>
        </authorList>
    </citation>
    <scope>NUCLEOTIDE SEQUENCE [LARGE SCALE MRNA]</scope>
    <source>
        <tissue>Ovary</tissue>
    </source>
</reference>
<reference key="2">
    <citation type="journal article" date="2014" name="CNS Neurosci. Ther.">
        <title>Subfatin is a novel adipokine and unlike Meteorin in adipose and brain expression.</title>
        <authorList>
            <person name="Li Z.Y."/>
            <person name="Zheng S.L."/>
            <person name="Wang P."/>
            <person name="Xu T.Y."/>
            <person name="Guan Y.F."/>
            <person name="Zhang Y.J."/>
            <person name="Miao C.Y."/>
        </authorList>
    </citation>
    <scope>TISSUE SPECIFICITY</scope>
</reference>
<evidence type="ECO:0000250" key="1"/>
<evidence type="ECO:0000255" key="2"/>
<evidence type="ECO:0000255" key="3">
    <source>
        <dbReference type="PROSITE-ProRule" id="PRU00114"/>
    </source>
</evidence>
<evidence type="ECO:0000269" key="4">
    <source>
    </source>
</evidence>
<evidence type="ECO:0000305" key="5"/>
<comment type="function">
    <text evidence="1">Hormone induced following exercise or cold exposure that promotes energy expenditure. Induced either in the skeletal muscle after exercise or in adipose tissue following cold exposure and is present in the circulation. Able to stimulate energy expenditure associated with the browning of the white fat depots and improves glucose tolerance. Does not promote an increase in a thermogenic gene program via direct action on adipocytes, but acts by stimulating several immune cell subtypes to enter the adipose tissue and activate their prothermogenic actions. Stimulates an eosinophil-dependent increase in IL4 expression and promotes alternative activation of adipose tissue macrophages, which are required for the increased expression of the thermogenic and anti-inflammatory gene programs in fat. Required for some cold-induced thermogenic responses, suggesting a role in metabolic adaptations to cold temperatures (By similarity).</text>
</comment>
<comment type="subcellular location">
    <subcellularLocation>
        <location evidence="1">Secreted</location>
    </subcellularLocation>
</comment>
<comment type="tissue specificity">
    <text evidence="4">Abundantly expressed in adipose tissue.</text>
</comment>
<comment type="similarity">
    <text evidence="5">Belongs to the meteorin family.</text>
</comment>
<gene>
    <name type="primary">Metrnl</name>
</gene>